<evidence type="ECO:0000250" key="1">
    <source>
        <dbReference type="UniProtKB" id="A0A455R4Z0"/>
    </source>
</evidence>
<evidence type="ECO:0000255" key="2"/>
<evidence type="ECO:0000269" key="3">
    <source>
    </source>
</evidence>
<evidence type="ECO:0000303" key="4">
    <source>
    </source>
</evidence>
<evidence type="ECO:0000305" key="5"/>
<keyword id="KW-0413">Isomerase</keyword>
<keyword id="KW-0472">Membrane</keyword>
<keyword id="KW-1185">Reference proteome</keyword>
<keyword id="KW-0812">Transmembrane</keyword>
<keyword id="KW-1133">Transmembrane helix</keyword>
<reference key="1">
    <citation type="journal article" date="2005" name="Nature">
        <title>Sequencing of Aspergillus nidulans and comparative analysis with A. fumigatus and A. oryzae.</title>
        <authorList>
            <person name="Galagan J.E."/>
            <person name="Calvo S.E."/>
            <person name="Cuomo C."/>
            <person name="Ma L.-J."/>
            <person name="Wortman J.R."/>
            <person name="Batzoglou S."/>
            <person name="Lee S.-I."/>
            <person name="Bastuerkmen M."/>
            <person name="Spevak C.C."/>
            <person name="Clutterbuck J."/>
            <person name="Kapitonov V."/>
            <person name="Jurka J."/>
            <person name="Scazzocchio C."/>
            <person name="Farman M.L."/>
            <person name="Butler J."/>
            <person name="Purcell S."/>
            <person name="Harris S."/>
            <person name="Braus G.H."/>
            <person name="Draht O."/>
            <person name="Busch S."/>
            <person name="D'Enfert C."/>
            <person name="Bouchier C."/>
            <person name="Goldman G.H."/>
            <person name="Bell-Pedersen D."/>
            <person name="Griffiths-Jones S."/>
            <person name="Doonan J.H."/>
            <person name="Yu J."/>
            <person name="Vienken K."/>
            <person name="Pain A."/>
            <person name="Freitag M."/>
            <person name="Selker E.U."/>
            <person name="Archer D.B."/>
            <person name="Penalva M.A."/>
            <person name="Oakley B.R."/>
            <person name="Momany M."/>
            <person name="Tanaka T."/>
            <person name="Kumagai T."/>
            <person name="Asai K."/>
            <person name="Machida M."/>
            <person name="Nierman W.C."/>
            <person name="Denning D.W."/>
            <person name="Caddick M.X."/>
            <person name="Hynes M."/>
            <person name="Paoletti M."/>
            <person name="Fischer R."/>
            <person name="Miller B.L."/>
            <person name="Dyer P.S."/>
            <person name="Sachs M.S."/>
            <person name="Osmani S.A."/>
            <person name="Birren B.W."/>
        </authorList>
    </citation>
    <scope>NUCLEOTIDE SEQUENCE [LARGE SCALE GENOMIC DNA]</scope>
    <source>
        <strain>FGSC A4 / ATCC 38163 / CBS 112.46 / NRRL 194 / M139</strain>
    </source>
</reference>
<reference key="2">
    <citation type="journal article" date="2009" name="Fungal Genet. Biol.">
        <title>The 2008 update of the Aspergillus nidulans genome annotation: a community effort.</title>
        <authorList>
            <person name="Wortman J.R."/>
            <person name="Gilsenan J.M."/>
            <person name="Joardar V."/>
            <person name="Deegan J."/>
            <person name="Clutterbuck J."/>
            <person name="Andersen M.R."/>
            <person name="Archer D."/>
            <person name="Bencina M."/>
            <person name="Braus G."/>
            <person name="Coutinho P."/>
            <person name="von Dohren H."/>
            <person name="Doonan J."/>
            <person name="Driessen A.J."/>
            <person name="Durek P."/>
            <person name="Espeso E."/>
            <person name="Fekete E."/>
            <person name="Flipphi M."/>
            <person name="Estrada C.G."/>
            <person name="Geysens S."/>
            <person name="Goldman G."/>
            <person name="de Groot P.W."/>
            <person name="Hansen K."/>
            <person name="Harris S.D."/>
            <person name="Heinekamp T."/>
            <person name="Helmstaedt K."/>
            <person name="Henrissat B."/>
            <person name="Hofmann G."/>
            <person name="Homan T."/>
            <person name="Horio T."/>
            <person name="Horiuchi H."/>
            <person name="James S."/>
            <person name="Jones M."/>
            <person name="Karaffa L."/>
            <person name="Karanyi Z."/>
            <person name="Kato M."/>
            <person name="Keller N."/>
            <person name="Kelly D.E."/>
            <person name="Kiel J.A."/>
            <person name="Kim J.M."/>
            <person name="van der Klei I.J."/>
            <person name="Klis F.M."/>
            <person name="Kovalchuk A."/>
            <person name="Krasevec N."/>
            <person name="Kubicek C.P."/>
            <person name="Liu B."/>
            <person name="Maccabe A."/>
            <person name="Meyer V."/>
            <person name="Mirabito P."/>
            <person name="Miskei M."/>
            <person name="Mos M."/>
            <person name="Mullins J."/>
            <person name="Nelson D.R."/>
            <person name="Nielsen J."/>
            <person name="Oakley B.R."/>
            <person name="Osmani S.A."/>
            <person name="Pakula T."/>
            <person name="Paszewski A."/>
            <person name="Paulsen I."/>
            <person name="Pilsyk S."/>
            <person name="Pocsi I."/>
            <person name="Punt P.J."/>
            <person name="Ram A.F."/>
            <person name="Ren Q."/>
            <person name="Robellet X."/>
            <person name="Robson G."/>
            <person name="Seiboth B."/>
            <person name="van Solingen P."/>
            <person name="Specht T."/>
            <person name="Sun J."/>
            <person name="Taheri-Talesh N."/>
            <person name="Takeshita N."/>
            <person name="Ussery D."/>
            <person name="vanKuyk P.A."/>
            <person name="Visser H."/>
            <person name="van de Vondervoort P.J."/>
            <person name="de Vries R.P."/>
            <person name="Walton J."/>
            <person name="Xiang X."/>
            <person name="Xiong Y."/>
            <person name="Zeng A.P."/>
            <person name="Brandt B.W."/>
            <person name="Cornell M.J."/>
            <person name="van den Hondel C.A."/>
            <person name="Visser J."/>
            <person name="Oliver S.G."/>
            <person name="Turner G."/>
        </authorList>
    </citation>
    <scope>GENOME REANNOTATION</scope>
    <source>
        <strain>FGSC A4 / ATCC 38163 / CBS 112.46 / NRRL 194 / M139</strain>
    </source>
</reference>
<reference key="3">
    <citation type="journal article" date="2019" name="ChemBioChem">
        <title>Discovery and elucidation of the biosynthesis of aspernidgulenes: novel polyenes from Aspergillus nidulans by using serial promoter replacement.</title>
        <authorList>
            <person name="Lin T.S."/>
            <person name="Chen B."/>
            <person name="Chiang Y.M."/>
            <person name="Wang C.C.C."/>
        </authorList>
    </citation>
    <scope>FUNCTION</scope>
    <scope>CATALYTIC ACTIVITY</scope>
    <scope>PATHWAY</scope>
</reference>
<organism>
    <name type="scientific">Emericella nidulans (strain FGSC A4 / ATCC 38163 / CBS 112.46 / NRRL 194 / M139)</name>
    <name type="common">Aspergillus nidulans</name>
    <dbReference type="NCBI Taxonomy" id="227321"/>
    <lineage>
        <taxon>Eukaryota</taxon>
        <taxon>Fungi</taxon>
        <taxon>Dikarya</taxon>
        <taxon>Ascomycota</taxon>
        <taxon>Pezizomycotina</taxon>
        <taxon>Eurotiomycetes</taxon>
        <taxon>Eurotiomycetidae</taxon>
        <taxon>Eurotiales</taxon>
        <taxon>Aspergillaceae</taxon>
        <taxon>Aspergillus</taxon>
        <taxon>Aspergillus subgen. Nidulantes</taxon>
    </lineage>
</organism>
<gene>
    <name evidence="4" type="primary">sdgD</name>
    <name type="ORF">AN1785</name>
    <name type="ORF">ANIA_01785</name>
</gene>
<comment type="function">
    <text evidence="3">Epoxide hydrolase; part of the gene cluster that mediates the biosynthesis of the polyenes aspernidgulenes (PubMed:30302871). The carbon backbone of aspernidgulenes is synthesized by the HR-PKS sdgA, which accepts acetyl-CoA as the starter unit and performs malonyl-CoA extensions as well as regioselective methylation and reduction (PubMed:30302871). The resulting nonaketide offloads the HR-PKS by intramolecular lactonization to yield the 5,6-dihydro-alpha-pyrone-containing hexaenoic acids preaspernidgulene A1 and A2 (PubMed:30302871). The FAD-dependent monooxygenase sdgC then installs the first epoxide on the penultimate double bond (PubMed:30302871). Subsequently, the FAD-dependent monooxygenase sdgF presumably generates a ketone intermediate through Meinwald rearrangement involving a hydride shift (PubMed:30302871). Next, sdgC introduces another epoxide on the last olefin of the ketone intermediate after E/Z isomerization (PubMed:30302871). The epoxide hydrolase sdgD then catalyzes stereospecific cyclization of the 5,6-dihydro-alpha-pyrone and opening of the epoxide ring to form an oxygenated trimethylcyclopentanone and an oxabicyclo[2.2.1]heptane unit (PubMed:30302871). Finally, the bicyclic unit undergoes hydrolytic cleavage, either spontaneously or catalyzed by sdgD, to assemble the dimethyl-gamma-lactone moiety in aspernidgulene A1 (PubMed:30302871).</text>
</comment>
<comment type="pathway">
    <text evidence="3">Secondary metabolite biosynthesis.</text>
</comment>
<comment type="subcellular location">
    <subcellularLocation>
        <location evidence="2">Membrane</location>
        <topology evidence="2">Multi-pass membrane protein</topology>
    </subcellularLocation>
</comment>
<comment type="similarity">
    <text evidence="5">Belongs to the membrane-bound ascI terpene cyclase family.</text>
</comment>
<protein>
    <recommendedName>
        <fullName evidence="1">Terpene cyclase sdgD</fullName>
        <ecNumber evidence="3">5.4.99.-</ecNumber>
    </recommendedName>
    <alternativeName>
        <fullName evidence="4">Aspernidgulenes biosynthesis cluster protein D</fullName>
    </alternativeName>
</protein>
<feature type="chain" id="PRO_0000451914" description="Terpene cyclase sdgD">
    <location>
        <begin position="1"/>
        <end position="351"/>
    </location>
</feature>
<feature type="transmembrane region" description="Helical" evidence="2">
    <location>
        <begin position="7"/>
        <end position="27"/>
    </location>
</feature>
<feature type="transmembrane region" description="Helical" evidence="2">
    <location>
        <begin position="62"/>
        <end position="82"/>
    </location>
</feature>
<feature type="transmembrane region" description="Helical" evidence="2">
    <location>
        <begin position="89"/>
        <end position="109"/>
    </location>
</feature>
<feature type="transmembrane region" description="Helical" evidence="2">
    <location>
        <begin position="126"/>
        <end position="146"/>
    </location>
</feature>
<feature type="transmembrane region" description="Helical" evidence="2">
    <location>
        <begin position="160"/>
        <end position="180"/>
    </location>
</feature>
<feature type="transmembrane region" description="Helical" evidence="2">
    <location>
        <begin position="193"/>
        <end position="213"/>
    </location>
</feature>
<feature type="transmembrane region" description="Helical" evidence="2">
    <location>
        <begin position="229"/>
        <end position="249"/>
    </location>
</feature>
<feature type="transmembrane region" description="Helical" evidence="2">
    <location>
        <begin position="281"/>
        <end position="301"/>
    </location>
</feature>
<feature type="transmembrane region" description="Helical" evidence="2">
    <location>
        <begin position="316"/>
        <end position="336"/>
    </location>
</feature>
<sequence>MSHQSTINFIRFTFVILSLLAIYTILIPSIRKGFFQHITECEVTGKLSRSSGADARMIESFTGVPVLDIFVKALVTSFWPVINGENPALSLLGVPAVASMGVSYLLLLLEARRTRSLLSVTWRLAWVGLLQTNFSQAIILPIYCAIAFSSSKKTNGFRPIPHVTISLILCVYTGMALVALPSPAVIPDGLKQVVVAFMVPWALWVFVMVFMASYLFPIEVEKEKSRRTIYIFALVIAATTHLGALLASLLHADLGPADVFLPPLPWYVTRFPSLEEGMASFLQWDYLIASVTLFLWAVAVYLRDCDEHVDWQRFGLEVCAISVIISPAAMAVLLIWRLDEMLSRRGIAKED</sequence>
<dbReference type="EC" id="5.4.99.-" evidence="3"/>
<dbReference type="EMBL" id="BN001307">
    <property type="protein sequence ID" value="CBF85557.1"/>
    <property type="molecule type" value="Genomic_DNA"/>
</dbReference>
<dbReference type="EMBL" id="AACD01000028">
    <property type="protein sequence ID" value="EAA63961.1"/>
    <property type="molecule type" value="Genomic_DNA"/>
</dbReference>
<dbReference type="RefSeq" id="XP_659389.1">
    <property type="nucleotide sequence ID" value="XM_654297.1"/>
</dbReference>
<dbReference type="EnsemblFungi" id="CBF85557">
    <property type="protein sequence ID" value="CBF85557"/>
    <property type="gene ID" value="ANIA_01785"/>
</dbReference>
<dbReference type="GeneID" id="2875013"/>
<dbReference type="KEGG" id="ani:ANIA_01785"/>
<dbReference type="VEuPathDB" id="FungiDB:AN1785"/>
<dbReference type="eggNOG" id="ENOG502SHVK">
    <property type="taxonomic scope" value="Eukaryota"/>
</dbReference>
<dbReference type="HOGENOM" id="CLU_038717_0_0_1"/>
<dbReference type="InParanoid" id="A0A1U8QW16"/>
<dbReference type="OMA" id="MIMALPC"/>
<dbReference type="OrthoDB" id="72269at2759"/>
<dbReference type="Proteomes" id="UP000000560">
    <property type="component" value="Chromosome VII"/>
</dbReference>
<dbReference type="GO" id="GO:0016020">
    <property type="term" value="C:membrane"/>
    <property type="evidence" value="ECO:0007669"/>
    <property type="project" value="UniProtKB-SubCell"/>
</dbReference>
<dbReference type="GO" id="GO:0016853">
    <property type="term" value="F:isomerase activity"/>
    <property type="evidence" value="ECO:0007669"/>
    <property type="project" value="UniProtKB-KW"/>
</dbReference>
<name>SDGD_EMENI</name>
<accession>A0A1U8QW16</accession>
<accession>C8VPE3</accession>
<accession>Q5BCE5</accession>
<proteinExistence type="evidence at protein level"/>